<organism>
    <name type="scientific">Mus musculus</name>
    <name type="common">Mouse</name>
    <dbReference type="NCBI Taxonomy" id="10090"/>
    <lineage>
        <taxon>Eukaryota</taxon>
        <taxon>Metazoa</taxon>
        <taxon>Chordata</taxon>
        <taxon>Craniata</taxon>
        <taxon>Vertebrata</taxon>
        <taxon>Euteleostomi</taxon>
        <taxon>Mammalia</taxon>
        <taxon>Eutheria</taxon>
        <taxon>Euarchontoglires</taxon>
        <taxon>Glires</taxon>
        <taxon>Rodentia</taxon>
        <taxon>Myomorpha</taxon>
        <taxon>Muroidea</taxon>
        <taxon>Muridae</taxon>
        <taxon>Murinae</taxon>
        <taxon>Mus</taxon>
        <taxon>Mus</taxon>
    </lineage>
</organism>
<name>DIAP1_MOUSE</name>
<protein>
    <recommendedName>
        <fullName>Protein diaphanous homolog 1</fullName>
    </recommendedName>
    <alternativeName>
        <fullName>Diaphanous-related formin-1</fullName>
        <shortName>DRF1</shortName>
    </alternativeName>
    <alternativeName>
        <fullName>p140mDIA</fullName>
        <shortName evidence="20">mDIA1</shortName>
    </alternativeName>
</protein>
<evidence type="ECO:0000250" key="1">
    <source>
        <dbReference type="UniProtKB" id="O60610"/>
    </source>
</evidence>
<evidence type="ECO:0000255" key="2"/>
<evidence type="ECO:0000255" key="3">
    <source>
        <dbReference type="PROSITE-ProRule" id="PRU00577"/>
    </source>
</evidence>
<evidence type="ECO:0000255" key="4">
    <source>
        <dbReference type="PROSITE-ProRule" id="PRU00579"/>
    </source>
</evidence>
<evidence type="ECO:0000255" key="5">
    <source>
        <dbReference type="PROSITE-ProRule" id="PRU00774"/>
    </source>
</evidence>
<evidence type="ECO:0000256" key="6">
    <source>
        <dbReference type="SAM" id="MobiDB-lite"/>
    </source>
</evidence>
<evidence type="ECO:0000269" key="7">
    <source>
    </source>
</evidence>
<evidence type="ECO:0000269" key="8">
    <source>
    </source>
</evidence>
<evidence type="ECO:0000269" key="9">
    <source>
    </source>
</evidence>
<evidence type="ECO:0000269" key="10">
    <source>
    </source>
</evidence>
<evidence type="ECO:0000269" key="11">
    <source>
    </source>
</evidence>
<evidence type="ECO:0000269" key="12">
    <source>
    </source>
</evidence>
<evidence type="ECO:0000269" key="13">
    <source>
    </source>
</evidence>
<evidence type="ECO:0000269" key="14">
    <source>
    </source>
</evidence>
<evidence type="ECO:0000269" key="15">
    <source>
    </source>
</evidence>
<evidence type="ECO:0000269" key="16">
    <source>
    </source>
</evidence>
<evidence type="ECO:0000269" key="17">
    <source>
    </source>
</evidence>
<evidence type="ECO:0000269" key="18">
    <source>
    </source>
</evidence>
<evidence type="ECO:0000269" key="19">
    <source>
    </source>
</evidence>
<evidence type="ECO:0000303" key="20">
    <source>
    </source>
</evidence>
<evidence type="ECO:0000305" key="21"/>
<evidence type="ECO:0007744" key="22">
    <source>
    </source>
</evidence>
<evidence type="ECO:0007829" key="23">
    <source>
        <dbReference type="PDB" id="1V9D"/>
    </source>
</evidence>
<evidence type="ECO:0007829" key="24">
    <source>
        <dbReference type="PDB" id="2BAP"/>
    </source>
</evidence>
<evidence type="ECO:0007829" key="25">
    <source>
        <dbReference type="PDB" id="2BNX"/>
    </source>
</evidence>
<evidence type="ECO:0007829" key="26">
    <source>
        <dbReference type="PDB" id="2F31"/>
    </source>
</evidence>
<evidence type="ECO:0007829" key="27">
    <source>
        <dbReference type="PDB" id="3EG5"/>
    </source>
</evidence>
<evidence type="ECO:0007829" key="28">
    <source>
        <dbReference type="PDB" id="3O4X"/>
    </source>
</evidence>
<evidence type="ECO:0007829" key="29">
    <source>
        <dbReference type="PDB" id="3OBV"/>
    </source>
</evidence>
<evidence type="ECO:0007829" key="30">
    <source>
        <dbReference type="PDB" id="4UWX"/>
    </source>
</evidence>
<evidence type="ECO:0007829" key="31">
    <source>
        <dbReference type="PDB" id="8RU2"/>
    </source>
</evidence>
<evidence type="ECO:0007829" key="32">
    <source>
        <dbReference type="PDB" id="9B3D"/>
    </source>
</evidence>
<feature type="chain" id="PRO_0000194894" description="Protein diaphanous homolog 1">
    <location>
        <begin position="1"/>
        <end position="1255"/>
    </location>
</feature>
<feature type="domain" description="GBD/FH3" evidence="4">
    <location>
        <begin position="75"/>
        <end position="440"/>
    </location>
</feature>
<feature type="domain" description="FH1">
    <location>
        <begin position="586"/>
        <end position="747"/>
    </location>
</feature>
<feature type="domain" description="FH2" evidence="5">
    <location>
        <begin position="752"/>
        <end position="1154"/>
    </location>
</feature>
<feature type="domain" description="DAD" evidence="3">
    <location>
        <begin position="1177"/>
        <end position="1205"/>
    </location>
</feature>
<feature type="region of interest" description="Disordered" evidence="6">
    <location>
        <begin position="1"/>
        <end position="73"/>
    </location>
</feature>
<feature type="region of interest" description="Disordered" evidence="6">
    <location>
        <begin position="567"/>
        <end position="737"/>
    </location>
</feature>
<feature type="coiled-coil region" evidence="2">
    <location>
        <begin position="460"/>
        <end position="562"/>
    </location>
</feature>
<feature type="coiled-coil region" evidence="2">
    <location>
        <begin position="1027"/>
        <end position="1179"/>
    </location>
</feature>
<feature type="compositionally biased region" description="Gly residues" evidence="6">
    <location>
        <begin position="1"/>
        <end position="12"/>
    </location>
</feature>
<feature type="compositionally biased region" description="Polar residues" evidence="6">
    <location>
        <begin position="58"/>
        <end position="73"/>
    </location>
</feature>
<feature type="compositionally biased region" description="Pro residues" evidence="6">
    <location>
        <begin position="585"/>
        <end position="736"/>
    </location>
</feature>
<feature type="modified residue" description="N-acetylmethionine" evidence="1">
    <location>
        <position position="1"/>
    </location>
</feature>
<feature type="modified residue" description="Phosphoserine" evidence="1">
    <location>
        <position position="22"/>
    </location>
</feature>
<feature type="modified residue" description="Phosphothreonine" evidence="1">
    <location>
        <position position="751"/>
    </location>
</feature>
<feature type="modified residue" description="N6-acetyllysine" evidence="1">
    <location>
        <position position="1040"/>
    </location>
</feature>
<feature type="modified residue" description="N6-acetyllysine" evidence="1">
    <location>
        <position position="1086"/>
    </location>
</feature>
<feature type="modified residue" description="Phosphotyrosine" evidence="22">
    <location>
        <position position="1104"/>
    </location>
</feature>
<feature type="modified residue" description="Phosphoserine" evidence="1">
    <location>
        <position position="1237"/>
    </location>
</feature>
<feature type="helix" evidence="27">
    <location>
        <begin position="85"/>
        <end position="93"/>
    </location>
</feature>
<feature type="helix" evidence="27">
    <location>
        <begin position="98"/>
        <end position="105"/>
    </location>
</feature>
<feature type="helix" evidence="27">
    <location>
        <begin position="109"/>
        <end position="122"/>
    </location>
</feature>
<feature type="helix" evidence="30">
    <location>
        <begin position="135"/>
        <end position="143"/>
    </location>
</feature>
<feature type="turn" evidence="30">
    <location>
        <begin position="144"/>
        <end position="146"/>
    </location>
</feature>
<feature type="helix" evidence="30">
    <location>
        <begin position="149"/>
        <end position="165"/>
    </location>
</feature>
<feature type="helix" evidence="30">
    <location>
        <begin position="168"/>
        <end position="191"/>
    </location>
</feature>
<feature type="turn" evidence="25">
    <location>
        <begin position="194"/>
        <end position="196"/>
    </location>
</feature>
<feature type="helix" evidence="30">
    <location>
        <begin position="201"/>
        <end position="215"/>
    </location>
</feature>
<feature type="helix" evidence="30">
    <location>
        <begin position="219"/>
        <end position="226"/>
    </location>
</feature>
<feature type="strand" evidence="30">
    <location>
        <begin position="228"/>
        <end position="230"/>
    </location>
</feature>
<feature type="helix" evidence="30">
    <location>
        <begin position="231"/>
        <end position="237"/>
    </location>
</feature>
<feature type="helix" evidence="30">
    <location>
        <begin position="244"/>
        <end position="258"/>
    </location>
</feature>
<feature type="strand" evidence="30">
    <location>
        <begin position="261"/>
        <end position="264"/>
    </location>
</feature>
<feature type="helix" evidence="30">
    <location>
        <begin position="266"/>
        <end position="281"/>
    </location>
</feature>
<feature type="helix" evidence="30">
    <location>
        <begin position="287"/>
        <end position="292"/>
    </location>
</feature>
<feature type="helix" evidence="30">
    <location>
        <begin position="299"/>
        <end position="313"/>
    </location>
</feature>
<feature type="helix" evidence="30">
    <location>
        <begin position="319"/>
        <end position="332"/>
    </location>
</feature>
<feature type="helix" evidence="30">
    <location>
        <begin position="334"/>
        <end position="342"/>
    </location>
</feature>
<feature type="helix" evidence="30">
    <location>
        <begin position="347"/>
        <end position="367"/>
    </location>
</feature>
<feature type="helix" evidence="25">
    <location>
        <begin position="381"/>
        <end position="392"/>
    </location>
</feature>
<feature type="strand" evidence="24">
    <location>
        <begin position="393"/>
        <end position="395"/>
    </location>
</feature>
<feature type="helix" evidence="25">
    <location>
        <begin position="397"/>
        <end position="408"/>
    </location>
</feature>
<feature type="turn" evidence="25">
    <location>
        <begin position="415"/>
        <end position="417"/>
    </location>
</feature>
<feature type="helix" evidence="25">
    <location>
        <begin position="418"/>
        <end position="433"/>
    </location>
</feature>
<feature type="helix" evidence="25">
    <location>
        <begin position="436"/>
        <end position="438"/>
    </location>
</feature>
<feature type="strand" evidence="29">
    <location>
        <begin position="447"/>
        <end position="451"/>
    </location>
</feature>
<feature type="turn" evidence="25">
    <location>
        <begin position="453"/>
        <end position="455"/>
    </location>
</feature>
<feature type="helix" evidence="25">
    <location>
        <begin position="457"/>
        <end position="461"/>
    </location>
</feature>
<feature type="helix" evidence="25">
    <location>
        <begin position="464"/>
        <end position="469"/>
    </location>
</feature>
<feature type="turn" evidence="25">
    <location>
        <begin position="470"/>
        <end position="472"/>
    </location>
</feature>
<feature type="strand" evidence="28">
    <location>
        <begin position="748"/>
        <end position="750"/>
    </location>
</feature>
<feature type="turn" evidence="29">
    <location>
        <begin position="772"/>
        <end position="775"/>
    </location>
</feature>
<feature type="strand" evidence="29">
    <location>
        <begin position="777"/>
        <end position="780"/>
    </location>
</feature>
<feature type="helix" evidence="29">
    <location>
        <begin position="781"/>
        <end position="783"/>
    </location>
</feature>
<feature type="helix" evidence="29">
    <location>
        <begin position="786"/>
        <end position="789"/>
    </location>
</feature>
<feature type="helix" evidence="29">
    <location>
        <begin position="794"/>
        <end position="801"/>
    </location>
</feature>
<feature type="strand" evidence="23">
    <location>
        <begin position="833"/>
        <end position="835"/>
    </location>
</feature>
<feature type="helix" evidence="23">
    <location>
        <begin position="837"/>
        <end position="850"/>
    </location>
</feature>
<feature type="helix" evidence="23">
    <location>
        <begin position="854"/>
        <end position="863"/>
    </location>
</feature>
<feature type="turn" evidence="23">
    <location>
        <begin position="866"/>
        <end position="868"/>
    </location>
</feature>
<feature type="helix" evidence="23">
    <location>
        <begin position="871"/>
        <end position="880"/>
    </location>
</feature>
<feature type="helix" evidence="23">
    <location>
        <begin position="884"/>
        <end position="891"/>
    </location>
</feature>
<feature type="helix" evidence="23">
    <location>
        <begin position="894"/>
        <end position="899"/>
    </location>
</feature>
<feature type="helix" evidence="23">
    <location>
        <begin position="902"/>
        <end position="911"/>
    </location>
</feature>
<feature type="strand" evidence="31">
    <location>
        <begin position="913"/>
        <end position="915"/>
    </location>
</feature>
<feature type="helix" evidence="23">
    <location>
        <begin position="916"/>
        <end position="934"/>
    </location>
</feature>
<feature type="helix" evidence="23">
    <location>
        <begin position="937"/>
        <end position="951"/>
    </location>
</feature>
<feature type="helix" evidence="23">
    <location>
        <begin position="954"/>
        <end position="958"/>
    </location>
</feature>
<feature type="helix" evidence="23">
    <location>
        <begin position="961"/>
        <end position="968"/>
    </location>
</feature>
<feature type="strand" evidence="23">
    <location>
        <begin position="972"/>
        <end position="974"/>
    </location>
</feature>
<feature type="turn" evidence="23">
    <location>
        <begin position="975"/>
        <end position="978"/>
    </location>
</feature>
<feature type="strand" evidence="28">
    <location>
        <begin position="980"/>
        <end position="982"/>
    </location>
</feature>
<feature type="helix" evidence="29">
    <location>
        <begin position="984"/>
        <end position="986"/>
    </location>
</feature>
<feature type="helix" evidence="23">
    <location>
        <begin position="987"/>
        <end position="992"/>
    </location>
</feature>
<feature type="strand" evidence="32">
    <location>
        <begin position="996"/>
        <end position="999"/>
    </location>
</feature>
<feature type="helix" evidence="23">
    <location>
        <begin position="1002"/>
        <end position="1012"/>
    </location>
</feature>
<feature type="helix" evidence="29">
    <location>
        <begin position="1015"/>
        <end position="1019"/>
    </location>
</feature>
<feature type="helix" evidence="23">
    <location>
        <begin position="1020"/>
        <end position="1023"/>
    </location>
</feature>
<feature type="helix" evidence="23">
    <location>
        <begin position="1027"/>
        <end position="1032"/>
    </location>
</feature>
<feature type="helix" evidence="23">
    <location>
        <begin position="1035"/>
        <end position="1057"/>
    </location>
</feature>
<feature type="strand" evidence="23">
    <location>
        <begin position="1063"/>
        <end position="1066"/>
    </location>
</feature>
<feature type="helix" evidence="23">
    <location>
        <begin position="1069"/>
        <end position="1104"/>
    </location>
</feature>
<feature type="turn" evidence="23">
    <location>
        <begin position="1109"/>
        <end position="1111"/>
    </location>
</feature>
<feature type="helix" evidence="23">
    <location>
        <begin position="1114"/>
        <end position="1159"/>
    </location>
</feature>
<feature type="helix" evidence="26">
    <location>
        <begin position="1181"/>
        <end position="1191"/>
    </location>
</feature>
<comment type="function">
    <text evidence="1 7 10 11 14 16 19">Actin nucleation and elongation factor required for the assembly of F-actin structures, such as actin cables and stress fibers (PubMed:10678165, PubMed:15044801, PubMed:18572016, PubMed:23558171). Binds to the barbed end of the actin filament and slows down actin polymerization and depolymerization (PubMed:10678165, PubMed:15044801, PubMed:18572016). Required for cytokinesis, and transcriptional activation of the serum response factor (PubMed:10678165, PubMed:15044801, PubMed:18572016). DFR proteins couple Rho and Src tyrosine kinase during signaling and the regulation of actin dynamics (PubMed:10678165, PubMed:15044801, PubMed:18572016). Functions as a scaffold protein for MAPRE1 and APC to stabilize microtubules and promote cell migration (PubMed:15311282). Has neurite outgrowth promoting activity (PubMed:10678165, PubMed:15044801, PubMed:18572016). Acts in a Rho-dependent manner to recruit PFY1 to the membrane (PubMed:9214622). The MEMO1-RHOA-DIAPH1 signaling pathway plays an important role in ERBB2-dependent stabilization of microtubules at the cell cortex (By similarity). It controls the localization of APC and CLASP2 to the cell membrane, via the regulation of GSK3B activity (By similarity). In turn, membrane-bound APC allows the localization of the MACF1 to the cell membrane, which is required for microtubule capture and stabilization (By similarity). Plays a role in the regulation of cell morphology and cytoskeletal organization (By similarity). Required in the control of cell shape (By similarity). Also acts as an actin nucleation and elongation factor in the nucleus by promoting nuclear actin polymerization inside the nucleus to drive serum-dependent SRF-MRTFA activity (PubMed:23558171).</text>
</comment>
<comment type="subunit">
    <text evidence="1 8 9 11 12 14 15 19">Homodimer (PubMed:14992721, PubMed:15864301). Interacts with the GTP-bound form of RHOA (PubMed:9214622). Interacts with RHOC, PFY1, MAPRE1, BAIAP2 and APC (PubMed:10814512, PubMed:15311282, PubMed:15864301). Interacts with APC; acts as a scaffold protein for MAPRE1 and APC to stabilize microtubules and promote cell migration (PubMed:15311282). Interacts with SCAI (PubMed:19350017). Interacts with DCAF7, via FH2 domain (By similarity). Interacts with NCDN (PubMed:18572016). Interacts with OSBPL10, OSBPL2, VIM, TUBB and DYN1 (By similarity).</text>
</comment>
<comment type="interaction">
    <interactant intactId="EBI-1026445">
        <id>O08808</id>
    </interactant>
    <interactant intactId="EBI-771498">
        <id>Q8BKX1</id>
        <label>Baiap2</label>
    </interactant>
    <organismsDiffer>false</organismsDiffer>
    <experiments>3</experiments>
</comment>
<comment type="interaction">
    <interactant intactId="EBI-1026445">
        <id>O08808</id>
    </interactant>
    <interactant intactId="EBI-1026445">
        <id>O08808</id>
        <label>Diaph1</label>
    </interactant>
    <organismsDiffer>false</organismsDiffer>
    <experiments>9</experiments>
</comment>
<comment type="interaction">
    <interactant intactId="EBI-1026445">
        <id>O08808</id>
    </interactant>
    <interactant intactId="EBI-297509">
        <id>P46940</id>
        <label>IQGAP1</label>
    </interactant>
    <organismsDiffer>true</organismsDiffer>
    <experiments>8</experiments>
</comment>
<comment type="interaction">
    <interactant intactId="EBI-1026445">
        <id>O08808</id>
    </interactant>
    <interactant intactId="EBI-446668">
        <id>P61586</id>
        <label>RHOA</label>
    </interactant>
    <organismsDiffer>true</organismsDiffer>
    <experiments>3</experiments>
</comment>
<comment type="subcellular location">
    <subcellularLocation>
        <location evidence="19">Cell membrane</location>
    </subcellularLocation>
    <subcellularLocation>
        <location evidence="19">Cell projection</location>
        <location evidence="19">Ruffle membrane</location>
    </subcellularLocation>
    <subcellularLocation>
        <location evidence="19">Cytoplasm</location>
        <location evidence="19">Cytoskeleton</location>
    </subcellularLocation>
    <subcellularLocation>
        <location evidence="1">Cytoplasm</location>
        <location evidence="1">Cytoskeleton</location>
        <location evidence="1">Microtubule organizing center</location>
        <location evidence="1">Centrosome</location>
    </subcellularLocation>
    <subcellularLocation>
        <location evidence="1">Cytoplasm</location>
        <location evidence="1">Cytoskeleton</location>
        <location evidence="1">Spindle</location>
    </subcellularLocation>
    <subcellularLocation>
        <location evidence="16">Cytoplasm</location>
    </subcellularLocation>
    <subcellularLocation>
        <location evidence="16">Nucleus</location>
    </subcellularLocation>
    <text evidence="19">Membrane ruffles, especially at the tip of ruffles, of motile cells.</text>
</comment>
<comment type="tissue specificity">
    <text evidence="18">Widely expressed. In the organ of Corti, it is expressed at the outer and inner hair cell layers. Expression at the inner hair cell layer is restricted to inner pillar cells. Detected in cochlear spiral ganglion neurons (PubMed:27808407).</text>
</comment>
<comment type="developmental stage">
    <text evidence="17">Expressed in the ventricular and subventricular zone progenitor cells of the dorsal and ventral forebrain and the brainstem, at 12.5 dpc, 14.5 dpc, and 17.5 dpc. At later embryonic age, it is observed in neurons of the cortex and hippocampus. During postnatal development, expression is detected in the cerebral cortex, basal ganglia, hippocampus, thalamus, and external granular layer of the cerebellum.</text>
</comment>
<comment type="domain">
    <text evidence="13">The DAD domain regulates activation via by an autoinhibitory interaction with the GBD/FH3 domain. This autoinhibition is released upon competitive binding of an activated GTPase. The release of DAD allows the FH2 domain to then nucleate and elongate nonbranched actin filaments.</text>
</comment>
<comment type="PTM">
    <text evidence="1">Phosphorylation at Thr-751 is stimulated by cAMP and regulates stability, complex formation and mitochondrial movement (By similarity).</text>
</comment>
<comment type="disruption phenotype">
    <text evidence="17">Knockout mice show normal organization of the cerebral cortex with no significant differences in cortical white matter or callosal thickness (PubMed:24781755). Histological analysis of coronal brain sections at early and postnatal stages shows unilateral ventricular enlargement (PubMed:24781755).</text>
</comment>
<comment type="similarity">
    <text evidence="21">Belongs to the formin homology family. Diaphanous subfamily.</text>
</comment>
<keyword id="KW-0002">3D-structure</keyword>
<keyword id="KW-0007">Acetylation</keyword>
<keyword id="KW-0009">Actin-binding</keyword>
<keyword id="KW-1003">Cell membrane</keyword>
<keyword id="KW-0966">Cell projection</keyword>
<keyword id="KW-0175">Coiled coil</keyword>
<keyword id="KW-0963">Cytoplasm</keyword>
<keyword id="KW-0206">Cytoskeleton</keyword>
<keyword id="KW-1009">Hearing</keyword>
<keyword id="KW-0472">Membrane</keyword>
<keyword id="KW-0539">Nucleus</keyword>
<keyword id="KW-0597">Phosphoprotein</keyword>
<keyword id="KW-1185">Reference proteome</keyword>
<keyword id="KW-0677">Repeat</keyword>
<sequence>MEPSGGGLGPGRGTRDKKKGRSPDELPATGGDGGKHKKFLERFTSMRIKKEKEKPNSAHRNSSASYGDDPTAQSLQDISDEQVLVLFEQMLVDMNLNEEKQQPLREKDIVIKREMVSQYLHTSKAGMNQKESSRSAMMYIQELRSGLRDMHLLSCLESLRVSLNNNPVSWVQTFGAEGLASLLDILKRLHDEKEETSGNYDSRNQHEIIRCLKAFMNNKFGIKTMLETEEGILLLVRAMDPAVPNMMIDAAKLLSALCILPQPEDMNERVLEAMTERAEMDEVERFQPLLDGLKSGTSIALKVGCLQLINALITPAEELDFRVHIRSELMRLGLHQVLQELREIENEDMKVQLCVFDEQGDEDFFDLKGRLDDIRMEMDDFGEVFQIILNTVKDSKAEPHFLSILQHLLLVRNDYEARPQYYKLIEECVSQIVLHKNGTDPDFKCRHLQIDIERLVDQMIDKTKVEKSEAKATELEKKLDSELTARHELQVEMKKMENDFEQKLQDLQGEKDALDSEKQQITAQKQDLEAEVSKLTGEVAKLSKELEDAKNEMASLSAVVVAPSVSSSAAVPPAPPLPGDSGTVIPPPPPPPPLPGGVVPPSPPLPPGTCIPPPPPLPGGACIPPPPQLPGSAAIPPPPPLPGVASIPPPPPLPGATAIPPPPPLPGATAIPPPPPLPGGTGIPPPPPPLPGSVGVPPPPPLPGGPGLPPPPPPFPGAPGIPPPPPGMGVPPPPPFGFGVPAAPVLPFGLTPKKVYKPEVQLRRPNWSKFVAEDLSQDCFWTKVKEDRFENNELFAKLTLAFSAQTKTSKAKKDQEGGEEKKSVQKKKVKELKVLDSKTAQNLSIFLGSFRMPYQEIKNVILEVNEAVLTESMIQNLIKQMPEPEQLKMLSELKEEYDDLAESEQFGVVMGTVPRLRPRLNAILFKLQFSEQVENIKPEIVSVTAACEELRKSENFSSLLELTLLVGNYMNAGSRNAGAFGFNISFLCKLRDTKSADQKMTLLHFLAELCENDHPEVLKFPDELAHVEKASRVSAENLQKSLDQMKKQIADVERDVQNFPAATDEKDKFVEKMTSFVKDAQEQYNKLRMMHSNMETLYKELGDYFVFDPKKLSVEEFFMDLHNFRNMFLQAVKENQKRRETEEKMRRAKLAKEKAEKERLEKQQKREQLIDMNAEGDETGVMDSLLEALQSGAAFRRKRGPRQVNRKAGCAVTSLLASELTKDDAMAPGPVKVPKKSEGVPTILEEAKELVGRAS</sequence>
<accession>O08808</accession>
<reference key="1">
    <citation type="journal article" date="1997" name="EMBO J.">
        <title>p140mDia, a mammalian homolog of Drosophila diaphanous, is a target protein for Rho small GTPase and is a ligand for profilin.</title>
        <authorList>
            <person name="Watanabe N."/>
            <person name="Madaule P."/>
            <person name="Reid T."/>
            <person name="Ishizaki T."/>
            <person name="Watanabe G."/>
            <person name="Kakizuka A."/>
            <person name="Saito Y."/>
            <person name="Nakao K."/>
            <person name="Jockusch B.M."/>
            <person name="Narumiya S."/>
        </authorList>
    </citation>
    <scope>NUCLEOTIDE SEQUENCE [MRNA]</scope>
    <scope>FUNCTION</scope>
    <scope>INTERACTION WITH RHOA</scope>
    <scope>SUBCELLULAR LOCATION</scope>
</reference>
<reference key="2">
    <citation type="journal article" date="2000" name="Biochem. Biophys. Res. Commun.">
        <title>Rho small G-protein-dependent binding of mDia to an Src homology 3 domain-containing IRSp53/BAIAP2.</title>
        <authorList>
            <person name="Fujiwara T."/>
            <person name="Mammoto A."/>
            <person name="Kim Y."/>
            <person name="Takai Y."/>
        </authorList>
    </citation>
    <scope>INTERACTION WITH BAIAP2</scope>
</reference>
<reference key="3">
    <citation type="journal article" date="2000" name="Mol. Cell">
        <title>Diaphanous-related formins bridge Rho GTPase and Src tyrosine kinase signaling.</title>
        <authorList>
            <person name="Tominaga T."/>
            <person name="Sahai E."/>
            <person name="Chardin P."/>
            <person name="McCormick F."/>
            <person name="Courtneidge S.A."/>
            <person name="Alberts A.S."/>
        </authorList>
    </citation>
    <scope>FUNCTION</scope>
</reference>
<reference key="4">
    <citation type="journal article" date="2004" name="Nat. Cell Biol.">
        <title>EB1 and APC bind to mDia to stabilize microtubules downstream of Rho and promote cell migration.</title>
        <authorList>
            <person name="Wen Y."/>
            <person name="Eng C.H."/>
            <person name="Schmoranzer J."/>
            <person name="Cabrera-Poch N."/>
            <person name="Morris E.J.S."/>
            <person name="Chen M."/>
            <person name="Wallar B.J."/>
            <person name="Alberts A.S."/>
            <person name="Gundersen G.G."/>
        </authorList>
    </citation>
    <scope>FUNCTION</scope>
    <scope>INTERACTION WITH APC AND MAPRE1</scope>
</reference>
<reference key="5">
    <citation type="journal article" date="2004" name="Science">
        <title>Actin polymerization-driven molecular movement of mDia1 in living cells.</title>
        <authorList>
            <person name="Higashida C."/>
            <person name="Miyoshi T."/>
            <person name="Fujita A."/>
            <person name="Oceguera-Yanez F."/>
            <person name="Monypenny J."/>
            <person name="Andou Y."/>
            <person name="Narumiya S."/>
            <person name="Watanabe N."/>
        </authorList>
    </citation>
    <scope>FUNCTION</scope>
    <scope>INTERACTION WITH ACTIN</scope>
</reference>
<reference key="6">
    <citation type="journal article" date="2006" name="Mol. Cell. Proteomics">
        <title>Comprehensive identification of phosphorylation sites in postsynaptic density preparations.</title>
        <authorList>
            <person name="Trinidad J.C."/>
            <person name="Specht C.G."/>
            <person name="Thalhammer A."/>
            <person name="Schoepfer R."/>
            <person name="Burlingame A.L."/>
        </authorList>
    </citation>
    <scope>IDENTIFICATION BY MASS SPECTROMETRY [LARGE SCALE ANALYSIS]</scope>
    <source>
        <tissue>Brain</tissue>
    </source>
</reference>
<reference key="7">
    <citation type="journal article" date="2007" name="J. Immunol.">
        <title>Quantitative time-resolved phosphoproteomic analysis of mast cell signaling.</title>
        <authorList>
            <person name="Cao L."/>
            <person name="Yu K."/>
            <person name="Banh C."/>
            <person name="Nguyen V."/>
            <person name="Ritz A."/>
            <person name="Raphael B.J."/>
            <person name="Kawakami Y."/>
            <person name="Kawakami T."/>
            <person name="Salomon A.R."/>
        </authorList>
    </citation>
    <scope>PHOSPHORYLATION [LARGE SCALE ANALYSIS] AT TYR-1104</scope>
    <scope>IDENTIFICATION BY MASS SPECTROMETRY [LARGE SCALE ANALYSIS]</scope>
    <source>
        <tissue>Mast cell</tissue>
    </source>
</reference>
<reference key="8">
    <citation type="journal article" date="2008" name="Biochem. Biophys. Res. Commun.">
        <title>Identification of Neurochondrin as a new interaction partner of the FH3 domain of the Diaphanous-related formin Dia1.</title>
        <authorList>
            <person name="Schwaibold E.M."/>
            <person name="Brandt D.T."/>
        </authorList>
    </citation>
    <scope>FUNCTION</scope>
    <scope>INTERACTION WITH NCDN</scope>
</reference>
<reference key="9">
    <citation type="journal article" date="2009" name="Nat. Cell Biol.">
        <title>SCAI acts as a suppressor of cancer cell invasion through the transcriptional control of beta1-integrin.</title>
        <authorList>
            <person name="Brandt D.T."/>
            <person name="Baarlink C."/>
            <person name="Kitzing T.M."/>
            <person name="Kremmer E."/>
            <person name="Ivaska J."/>
            <person name="Nollau P."/>
            <person name="Grosse R."/>
        </authorList>
    </citation>
    <scope>INTERACTION WITH SCAI</scope>
</reference>
<reference key="10">
    <citation type="journal article" date="2010" name="Cell">
        <title>A tissue-specific atlas of mouse protein phosphorylation and expression.</title>
        <authorList>
            <person name="Huttlin E.L."/>
            <person name="Jedrychowski M.P."/>
            <person name="Elias J.E."/>
            <person name="Goswami T."/>
            <person name="Rad R."/>
            <person name="Beausoleil S.A."/>
            <person name="Villen J."/>
            <person name="Haas W."/>
            <person name="Sowa M.E."/>
            <person name="Gygi S.P."/>
        </authorList>
    </citation>
    <scope>IDENTIFICATION BY MASS SPECTROMETRY [LARGE SCALE ANALYSIS]</scope>
    <source>
        <tissue>Brain</tissue>
        <tissue>Brown adipose tissue</tissue>
        <tissue>Heart</tissue>
        <tissue>Kidney</tissue>
        <tissue>Liver</tissue>
        <tissue>Lung</tissue>
        <tissue>Pancreas</tissue>
        <tissue>Spleen</tissue>
        <tissue>Testis</tissue>
    </source>
</reference>
<reference key="11">
    <citation type="journal article" date="2013" name="Science">
        <title>Nuclear actin network assembly by formins regulates the SRF coactivator MAL.</title>
        <authorList>
            <person name="Baarlink C."/>
            <person name="Wang H."/>
            <person name="Grosse R."/>
        </authorList>
    </citation>
    <scope>FUNCTION</scope>
    <scope>SUBCELLULAR LOCATION</scope>
</reference>
<reference key="12">
    <citation type="journal article" date="2015" name="Eur. J. Hum. Genet.">
        <title>Homozygous loss of DIAPH1 is a novel cause of microcephaly in humans.</title>
        <authorList>
            <person name="Ercan-Sencicek A.G."/>
            <person name="Jambi S."/>
            <person name="Franjic D."/>
            <person name="Nishimura S."/>
            <person name="Li M."/>
            <person name="El-Fishawy P."/>
            <person name="Morgan T.M."/>
            <person name="Sanders S.J."/>
            <person name="Bilguvar K."/>
            <person name="Suri M."/>
            <person name="Johnson M.H."/>
            <person name="Gupta A.R."/>
            <person name="Yuksel Z."/>
            <person name="Mane S."/>
            <person name="Grigorenko E."/>
            <person name="Picciotto M."/>
            <person name="Alberts A.S."/>
            <person name="Gunel M."/>
            <person name="Sestan N."/>
            <person name="State M.W."/>
        </authorList>
    </citation>
    <scope>DEVELOPMENTAL STAGE</scope>
    <scope>DISRUPTION PHENOTYPE</scope>
</reference>
<reference key="13">
    <citation type="journal article" date="2017" name="Clin. Genet.">
        <title>Extension of the clinical and molecular phenotype of DIAPH1-associated autosomal dominant hearing loss (DFNA1).</title>
        <authorList>
            <person name="Neuhaus C."/>
            <person name="Lang-Roth R."/>
            <person name="Zimmermann U."/>
            <person name="Heller R."/>
            <person name="Eisenberger T."/>
            <person name="Weikert M."/>
            <person name="Markus S."/>
            <person name="Knipper M."/>
            <person name="Bolz H.J."/>
        </authorList>
    </citation>
    <scope>TISSUE SPECIFICITY</scope>
</reference>
<reference key="14">
    <citation type="journal article" date="2004" name="Mol. Cell">
        <title>The core FH2 domain of diaphanous-related formins is an elongated actin binding protein that inhibits polymerization.</title>
        <authorList>
            <person name="Shimada A."/>
            <person name="Nyitrai M."/>
            <person name="Vetter I.R."/>
            <person name="Kuehlmann D."/>
            <person name="Bugyi B."/>
            <person name="Narumiya S."/>
            <person name="Geeves M.A."/>
            <person name="Wittinghofer A."/>
        </authorList>
    </citation>
    <scope>X-RAY CRYSTALLOGRAPHY (2.6 ANGSTROMS) OF 826-1163</scope>
    <scope>OLIGOMERIZATION</scope>
    <scope>INTERACTION WITH ACTIN</scope>
</reference>
<reference key="15">
    <citation type="journal article" date="2005" name="EMBO J.">
        <title>The regulation of mDia1 by autoinhibition and its release by Rho*GTP.</title>
        <authorList>
            <person name="Lammers M."/>
            <person name="Rose R."/>
            <person name="Scrima A."/>
            <person name="Wittinghofer A."/>
        </authorList>
    </citation>
    <scope>X-RAY CRYSTALLOGRAPHY (3.3 ANGSTROMS) OF 135-451 AND 1145-1200</scope>
    <scope>DOMAIN DAD</scope>
    <scope>AUTOINHIBITION</scope>
</reference>
<reference key="16">
    <citation type="journal article" date="2005" name="Nature">
        <title>Structural and mechanistic insights into the interaction between Rho and mammalian Dia.</title>
        <authorList>
            <person name="Rose R."/>
            <person name="Weyand M."/>
            <person name="Lammers M."/>
            <person name="Ishizaki T."/>
            <person name="Ahmadian M.R."/>
            <person name="Wittinghofer A."/>
        </authorList>
    </citation>
    <scope>X-RAY CRYSTALLOGRAPHY (3.0 ANGSTROMS) OF 69-451 IN COMPLEX WITH RHOC</scope>
    <scope>HOMODIMERIZATION</scope>
</reference>
<proteinExistence type="evidence at protein level"/>
<dbReference type="EMBL" id="U96963">
    <property type="protein sequence ID" value="AAC53280.1"/>
    <property type="molecule type" value="mRNA"/>
</dbReference>
<dbReference type="CCDS" id="CCDS57121.1"/>
<dbReference type="PIR" id="T31065">
    <property type="entry name" value="T31065"/>
</dbReference>
<dbReference type="RefSeq" id="NP_031884.1">
    <property type="nucleotide sequence ID" value="NM_007858.4"/>
</dbReference>
<dbReference type="PDB" id="1V9D">
    <property type="method" value="X-ray"/>
    <property type="resolution" value="2.60 A"/>
    <property type="chains" value="A/B/C/D=826-1163"/>
</dbReference>
<dbReference type="PDB" id="1Z2C">
    <property type="method" value="X-ray"/>
    <property type="resolution" value="3.00 A"/>
    <property type="chains" value="B/D=69-451"/>
</dbReference>
<dbReference type="PDB" id="2BAP">
    <property type="method" value="X-ray"/>
    <property type="resolution" value="3.30 A"/>
    <property type="chains" value="A/B=135-451, C/D=1145-1200"/>
</dbReference>
<dbReference type="PDB" id="2BNX">
    <property type="method" value="X-ray"/>
    <property type="resolution" value="2.40 A"/>
    <property type="chains" value="A/B=131-516"/>
</dbReference>
<dbReference type="PDB" id="2F31">
    <property type="method" value="X-ray"/>
    <property type="resolution" value="2.10 A"/>
    <property type="chains" value="A=135-367, B=1177-1196"/>
</dbReference>
<dbReference type="PDB" id="2V8F">
    <property type="method" value="X-ray"/>
    <property type="resolution" value="1.10 A"/>
    <property type="chains" value="C=635-655"/>
</dbReference>
<dbReference type="PDB" id="3EG5">
    <property type="method" value="X-ray"/>
    <property type="resolution" value="2.70 A"/>
    <property type="chains" value="B/D=69-451"/>
</dbReference>
<dbReference type="PDB" id="3O4X">
    <property type="method" value="X-ray"/>
    <property type="resolution" value="3.20 A"/>
    <property type="chains" value="A/B/C/D=131-458, E/F/G/H=736-1200"/>
</dbReference>
<dbReference type="PDB" id="3OBV">
    <property type="method" value="X-ray"/>
    <property type="resolution" value="2.75 A"/>
    <property type="chains" value="A/B/C/D=131-457, E/F/G/H=753-1209"/>
</dbReference>
<dbReference type="PDB" id="4UWX">
    <property type="method" value="X-ray"/>
    <property type="resolution" value="1.65 A"/>
    <property type="chains" value="A/B=135-369"/>
</dbReference>
<dbReference type="PDB" id="8RU2">
    <property type="method" value="EM"/>
    <property type="resolution" value="3.49 A"/>
    <property type="chains" value="E/F=688-1255"/>
</dbReference>
<dbReference type="PDB" id="9B27">
    <property type="method" value="EM"/>
    <property type="resolution" value="3.51 A"/>
    <property type="chains" value="G/H=745-1166"/>
</dbReference>
<dbReference type="PDB" id="9B3D">
    <property type="method" value="EM"/>
    <property type="resolution" value="3.41 A"/>
    <property type="chains" value="G/H=745-1143"/>
</dbReference>
<dbReference type="PDBsum" id="1V9D"/>
<dbReference type="PDBsum" id="1Z2C"/>
<dbReference type="PDBsum" id="2BAP"/>
<dbReference type="PDBsum" id="2BNX"/>
<dbReference type="PDBsum" id="2F31"/>
<dbReference type="PDBsum" id="2V8F"/>
<dbReference type="PDBsum" id="3EG5"/>
<dbReference type="PDBsum" id="3O4X"/>
<dbReference type="PDBsum" id="3OBV"/>
<dbReference type="PDBsum" id="4UWX"/>
<dbReference type="PDBsum" id="8RU2"/>
<dbReference type="PDBsum" id="9B27"/>
<dbReference type="PDBsum" id="9B3D"/>
<dbReference type="EMDB" id="EMD-19503"/>
<dbReference type="EMDB" id="EMD-44099"/>
<dbReference type="EMDB" id="EMD-44135"/>
<dbReference type="SMR" id="O08808"/>
<dbReference type="BioGRID" id="199221">
    <property type="interactions" value="19"/>
</dbReference>
<dbReference type="CORUM" id="O08808"/>
<dbReference type="DIP" id="DIP-29028N"/>
<dbReference type="FunCoup" id="O08808">
    <property type="interactions" value="1021"/>
</dbReference>
<dbReference type="IntAct" id="O08808">
    <property type="interactions" value="16"/>
</dbReference>
<dbReference type="STRING" id="10090.ENSMUSP00000025337"/>
<dbReference type="GlyGen" id="O08808">
    <property type="glycosylation" value="1 site, 1 N-linked glycan (1 site)"/>
</dbReference>
<dbReference type="iPTMnet" id="O08808"/>
<dbReference type="PhosphoSitePlus" id="O08808"/>
<dbReference type="SwissPalm" id="O08808"/>
<dbReference type="jPOST" id="O08808"/>
<dbReference type="PaxDb" id="10090-ENSMUSP00000025337"/>
<dbReference type="ProteomicsDB" id="279658"/>
<dbReference type="Pumba" id="O08808"/>
<dbReference type="Antibodypedia" id="7674">
    <property type="antibodies" value="380 antibodies from 40 providers"/>
</dbReference>
<dbReference type="DNASU" id="13367"/>
<dbReference type="Ensembl" id="ENSMUST00000115634.8">
    <property type="protein sequence ID" value="ENSMUSP00000111297.2"/>
    <property type="gene ID" value="ENSMUSG00000024456.18"/>
</dbReference>
<dbReference type="GeneID" id="13367"/>
<dbReference type="KEGG" id="mmu:13367"/>
<dbReference type="UCSC" id="uc033hgk.1">
    <property type="organism name" value="mouse"/>
</dbReference>
<dbReference type="AGR" id="MGI:1194490"/>
<dbReference type="CTD" id="1729"/>
<dbReference type="MGI" id="MGI:1194490">
    <property type="gene designation" value="Diaph1"/>
</dbReference>
<dbReference type="VEuPathDB" id="HostDB:ENSMUSG00000024456"/>
<dbReference type="eggNOG" id="KOG1924">
    <property type="taxonomic scope" value="Eukaryota"/>
</dbReference>
<dbReference type="GeneTree" id="ENSGT00940000159910"/>
<dbReference type="InParanoid" id="O08808"/>
<dbReference type="OrthoDB" id="1668162at2759"/>
<dbReference type="PhylomeDB" id="O08808"/>
<dbReference type="Reactome" id="R-MMU-5663220">
    <property type="pathway name" value="RHO GTPases Activate Formins"/>
</dbReference>
<dbReference type="Reactome" id="R-MMU-6785631">
    <property type="pathway name" value="ERBB2 Regulates Cell Motility"/>
</dbReference>
<dbReference type="Reactome" id="R-MMU-6798695">
    <property type="pathway name" value="Neutrophil degranulation"/>
</dbReference>
<dbReference type="Reactome" id="R-MMU-8980692">
    <property type="pathway name" value="RHOA GTPase cycle"/>
</dbReference>
<dbReference type="Reactome" id="R-MMU-9013026">
    <property type="pathway name" value="RHOB GTPase cycle"/>
</dbReference>
<dbReference type="Reactome" id="R-MMU-9013106">
    <property type="pathway name" value="RHOC GTPase cycle"/>
</dbReference>
<dbReference type="Reactome" id="R-MMU-9013405">
    <property type="pathway name" value="RHOD GTPase cycle"/>
</dbReference>
<dbReference type="Reactome" id="R-MMU-9035034">
    <property type="pathway name" value="RHOF GTPase cycle"/>
</dbReference>
<dbReference type="BioGRID-ORCS" id="13367">
    <property type="hits" value="6 hits in 47 CRISPR screens"/>
</dbReference>
<dbReference type="ChiTaRS" id="Diaph1">
    <property type="organism name" value="mouse"/>
</dbReference>
<dbReference type="EvolutionaryTrace" id="O08808"/>
<dbReference type="PRO" id="PR:O08808"/>
<dbReference type="Proteomes" id="UP000000589">
    <property type="component" value="Chromosome 18"/>
</dbReference>
<dbReference type="RNAct" id="O08808">
    <property type="molecule type" value="protein"/>
</dbReference>
<dbReference type="Bgee" id="ENSMUSG00000024456">
    <property type="expression patterns" value="Expressed in granulocyte and 259 other cell types or tissues"/>
</dbReference>
<dbReference type="ExpressionAtlas" id="O08808">
    <property type="expression patterns" value="baseline and differential"/>
</dbReference>
<dbReference type="GO" id="GO:0005903">
    <property type="term" value="C:brush border"/>
    <property type="evidence" value="ECO:0000314"/>
    <property type="project" value="UniProtKB"/>
</dbReference>
<dbReference type="GO" id="GO:0005813">
    <property type="term" value="C:centrosome"/>
    <property type="evidence" value="ECO:0007669"/>
    <property type="project" value="UniProtKB-SubCell"/>
</dbReference>
<dbReference type="GO" id="GO:0005737">
    <property type="term" value="C:cytoplasm"/>
    <property type="evidence" value="ECO:0000314"/>
    <property type="project" value="UniProtKB"/>
</dbReference>
<dbReference type="GO" id="GO:0043005">
    <property type="term" value="C:neuron projection"/>
    <property type="evidence" value="ECO:0000314"/>
    <property type="project" value="UniProtKB"/>
</dbReference>
<dbReference type="GO" id="GO:0005634">
    <property type="term" value="C:nucleus"/>
    <property type="evidence" value="ECO:0000314"/>
    <property type="project" value="UniProtKB"/>
</dbReference>
<dbReference type="GO" id="GO:0098793">
    <property type="term" value="C:presynapse"/>
    <property type="evidence" value="ECO:0007669"/>
    <property type="project" value="GOC"/>
</dbReference>
<dbReference type="GO" id="GO:0032587">
    <property type="term" value="C:ruffle membrane"/>
    <property type="evidence" value="ECO:0000314"/>
    <property type="project" value="MGI"/>
</dbReference>
<dbReference type="GO" id="GO:0005819">
    <property type="term" value="C:spindle"/>
    <property type="evidence" value="ECO:0007669"/>
    <property type="project" value="UniProtKB-SubCell"/>
</dbReference>
<dbReference type="GO" id="GO:0003779">
    <property type="term" value="F:actin binding"/>
    <property type="evidence" value="ECO:0000314"/>
    <property type="project" value="MGI"/>
</dbReference>
<dbReference type="GO" id="GO:0042802">
    <property type="term" value="F:identical protein binding"/>
    <property type="evidence" value="ECO:0000353"/>
    <property type="project" value="IntAct"/>
</dbReference>
<dbReference type="GO" id="GO:0005522">
    <property type="term" value="F:profilin binding"/>
    <property type="evidence" value="ECO:0000314"/>
    <property type="project" value="MGI"/>
</dbReference>
<dbReference type="GO" id="GO:0031267">
    <property type="term" value="F:small GTPase binding"/>
    <property type="evidence" value="ECO:0000314"/>
    <property type="project" value="MGI"/>
</dbReference>
<dbReference type="GO" id="GO:0044325">
    <property type="term" value="F:transmembrane transporter binding"/>
    <property type="evidence" value="ECO:0000353"/>
    <property type="project" value="BHF-UCL"/>
</dbReference>
<dbReference type="GO" id="GO:0030036">
    <property type="term" value="P:actin cytoskeleton organization"/>
    <property type="evidence" value="ECO:0000314"/>
    <property type="project" value="UniProtKB"/>
</dbReference>
<dbReference type="GO" id="GO:0030041">
    <property type="term" value="P:actin filament polymerization"/>
    <property type="evidence" value="ECO:0000314"/>
    <property type="project" value="UniProtKB"/>
</dbReference>
<dbReference type="GO" id="GO:0045010">
    <property type="term" value="P:actin nucleation"/>
    <property type="evidence" value="ECO:0000314"/>
    <property type="project" value="MGI"/>
</dbReference>
<dbReference type="GO" id="GO:0016199">
    <property type="term" value="P:axon midline choice point recognition"/>
    <property type="evidence" value="ECO:0000316"/>
    <property type="project" value="MGI"/>
</dbReference>
<dbReference type="GO" id="GO:0007420">
    <property type="term" value="P:brain development"/>
    <property type="evidence" value="ECO:0000315"/>
    <property type="project" value="UniProtKB"/>
</dbReference>
<dbReference type="GO" id="GO:0007010">
    <property type="term" value="P:cytoskeleton organization"/>
    <property type="evidence" value="ECO:0000314"/>
    <property type="project" value="UniProtKB"/>
</dbReference>
<dbReference type="GO" id="GO:0048013">
    <property type="term" value="P:ephrin receptor signaling pathway"/>
    <property type="evidence" value="ECO:0000316"/>
    <property type="project" value="MGI"/>
</dbReference>
<dbReference type="GO" id="GO:0010467">
    <property type="term" value="P:gene expression"/>
    <property type="evidence" value="ECO:0000314"/>
    <property type="project" value="MGI"/>
</dbReference>
<dbReference type="GO" id="GO:0071965">
    <property type="term" value="P:multicellular organismal locomotion"/>
    <property type="evidence" value="ECO:0000316"/>
    <property type="project" value="MGI"/>
</dbReference>
<dbReference type="GO" id="GO:0070571">
    <property type="term" value="P:negative regulation of neuron projection regeneration"/>
    <property type="evidence" value="ECO:0000316"/>
    <property type="project" value="MGI"/>
</dbReference>
<dbReference type="GO" id="GO:0031175">
    <property type="term" value="P:neuron projection development"/>
    <property type="evidence" value="ECO:0000314"/>
    <property type="project" value="UniProtKB"/>
</dbReference>
<dbReference type="GO" id="GO:0106028">
    <property type="term" value="P:neuron projection retraction"/>
    <property type="evidence" value="ECO:0000316"/>
    <property type="project" value="MGI"/>
</dbReference>
<dbReference type="GO" id="GO:0008104">
    <property type="term" value="P:protein localization"/>
    <property type="evidence" value="ECO:0000316"/>
    <property type="project" value="MGI"/>
</dbReference>
<dbReference type="GO" id="GO:0008360">
    <property type="term" value="P:regulation of cell shape"/>
    <property type="evidence" value="ECO:0000250"/>
    <property type="project" value="UniProtKB"/>
</dbReference>
<dbReference type="GO" id="GO:0032886">
    <property type="term" value="P:regulation of microtubule-based process"/>
    <property type="evidence" value="ECO:0000250"/>
    <property type="project" value="UniProtKB"/>
</dbReference>
<dbReference type="GO" id="GO:0007605">
    <property type="term" value="P:sensory perception of sound"/>
    <property type="evidence" value="ECO:0007669"/>
    <property type="project" value="UniProtKB-KW"/>
</dbReference>
<dbReference type="GO" id="GO:0048488">
    <property type="term" value="P:synaptic vesicle endocytosis"/>
    <property type="evidence" value="ECO:0000314"/>
    <property type="project" value="SynGO"/>
</dbReference>
<dbReference type="FunFam" id="1.25.10.10:FF:000109">
    <property type="entry name" value="Diaphanous homolog 1 (Drosophila)"/>
    <property type="match status" value="1"/>
</dbReference>
<dbReference type="FunFam" id="1.20.58.630:FF:000001">
    <property type="entry name" value="Diaphanous related formin 1"/>
    <property type="match status" value="1"/>
</dbReference>
<dbReference type="FunFam" id="1.20.58.2220:FF:000003">
    <property type="entry name" value="protein diaphanous homolog 1 isoform X2"/>
    <property type="match status" value="1"/>
</dbReference>
<dbReference type="FunFam" id="1.10.238.150:FF:000002">
    <property type="entry name" value="protein diaphanous homolog 2 isoform X2"/>
    <property type="match status" value="1"/>
</dbReference>
<dbReference type="Gene3D" id="1.20.1170.10">
    <property type="match status" value="1"/>
</dbReference>
<dbReference type="Gene3D" id="1.20.58.630">
    <property type="match status" value="1"/>
</dbReference>
<dbReference type="Gene3D" id="6.10.30.30">
    <property type="match status" value="1"/>
</dbReference>
<dbReference type="Gene3D" id="1.10.20.40">
    <property type="entry name" value="Formin, diaphanous GTPase-binding domain"/>
    <property type="match status" value="1"/>
</dbReference>
<dbReference type="Gene3D" id="1.20.58.2220">
    <property type="entry name" value="Formin, FH2 domain"/>
    <property type="match status" value="1"/>
</dbReference>
<dbReference type="Gene3D" id="1.10.238.150">
    <property type="entry name" value="Formin, FH3 diaphanous domain"/>
    <property type="match status" value="1"/>
</dbReference>
<dbReference type="Gene3D" id="1.25.10.10">
    <property type="entry name" value="Leucine-rich Repeat Variant"/>
    <property type="match status" value="1"/>
</dbReference>
<dbReference type="InterPro" id="IPR011989">
    <property type="entry name" value="ARM-like"/>
</dbReference>
<dbReference type="InterPro" id="IPR016024">
    <property type="entry name" value="ARM-type_fold"/>
</dbReference>
<dbReference type="InterPro" id="IPR014767">
    <property type="entry name" value="DAD_dom"/>
</dbReference>
<dbReference type="InterPro" id="IPR044933">
    <property type="entry name" value="DIA_GBD_sf"/>
</dbReference>
<dbReference type="InterPro" id="IPR010465">
    <property type="entry name" value="Drf_DAD"/>
</dbReference>
<dbReference type="InterPro" id="IPR015425">
    <property type="entry name" value="FH2_Formin"/>
</dbReference>
<dbReference type="InterPro" id="IPR042201">
    <property type="entry name" value="FH2_Formin_sf"/>
</dbReference>
<dbReference type="InterPro" id="IPR010472">
    <property type="entry name" value="FH3_dom"/>
</dbReference>
<dbReference type="InterPro" id="IPR051412">
    <property type="entry name" value="Formin_Homology_Diaphanous_sf"/>
</dbReference>
<dbReference type="InterPro" id="IPR014768">
    <property type="entry name" value="GBD/FH3_dom"/>
</dbReference>
<dbReference type="InterPro" id="IPR010473">
    <property type="entry name" value="GTPase-bd"/>
</dbReference>
<dbReference type="PANTHER" id="PTHR45691">
    <property type="entry name" value="PROTEIN DIAPHANOUS"/>
    <property type="match status" value="1"/>
</dbReference>
<dbReference type="PANTHER" id="PTHR45691:SF4">
    <property type="entry name" value="PROTEIN DIAPHANOUS HOMOLOG 1"/>
    <property type="match status" value="1"/>
</dbReference>
<dbReference type="Pfam" id="PF06345">
    <property type="entry name" value="Drf_DAD"/>
    <property type="match status" value="1"/>
</dbReference>
<dbReference type="Pfam" id="PF06346">
    <property type="entry name" value="Drf_FH1"/>
    <property type="match status" value="1"/>
</dbReference>
<dbReference type="Pfam" id="PF06367">
    <property type="entry name" value="Drf_FH3"/>
    <property type="match status" value="1"/>
</dbReference>
<dbReference type="Pfam" id="PF06371">
    <property type="entry name" value="Drf_GBD"/>
    <property type="match status" value="1"/>
</dbReference>
<dbReference type="Pfam" id="PF02181">
    <property type="entry name" value="FH2"/>
    <property type="match status" value="1"/>
</dbReference>
<dbReference type="SMART" id="SM01139">
    <property type="entry name" value="Drf_FH3"/>
    <property type="match status" value="1"/>
</dbReference>
<dbReference type="SMART" id="SM01140">
    <property type="entry name" value="Drf_GBD"/>
    <property type="match status" value="1"/>
</dbReference>
<dbReference type="SMART" id="SM00498">
    <property type="entry name" value="FH2"/>
    <property type="match status" value="1"/>
</dbReference>
<dbReference type="SUPFAM" id="SSF48371">
    <property type="entry name" value="ARM repeat"/>
    <property type="match status" value="1"/>
</dbReference>
<dbReference type="SUPFAM" id="SSF101447">
    <property type="entry name" value="Formin homology 2 domain (FH2 domain)"/>
    <property type="match status" value="1"/>
</dbReference>
<dbReference type="PROSITE" id="PS51231">
    <property type="entry name" value="DAD"/>
    <property type="match status" value="1"/>
</dbReference>
<dbReference type="PROSITE" id="PS51444">
    <property type="entry name" value="FH2"/>
    <property type="match status" value="1"/>
</dbReference>
<dbReference type="PROSITE" id="PS51232">
    <property type="entry name" value="GBD_FH3"/>
    <property type="match status" value="1"/>
</dbReference>
<gene>
    <name type="primary">Diaph1</name>
    <name type="synonym">Diap1</name>
</gene>